<gene>
    <name evidence="1" type="primary">rbfA</name>
    <name type="ordered locus">Cyan7425_0838</name>
</gene>
<proteinExistence type="inferred from homology"/>
<evidence type="ECO:0000255" key="1">
    <source>
        <dbReference type="HAMAP-Rule" id="MF_00003"/>
    </source>
</evidence>
<reference key="1">
    <citation type="journal article" date="2011" name="MBio">
        <title>Novel metabolic attributes of the genus Cyanothece, comprising a group of unicellular nitrogen-fixing Cyanobacteria.</title>
        <authorList>
            <person name="Bandyopadhyay A."/>
            <person name="Elvitigala T."/>
            <person name="Welsh E."/>
            <person name="Stockel J."/>
            <person name="Liberton M."/>
            <person name="Min H."/>
            <person name="Sherman L.A."/>
            <person name="Pakrasi H.B."/>
        </authorList>
    </citation>
    <scope>NUCLEOTIDE SEQUENCE [LARGE SCALE GENOMIC DNA]</scope>
    <source>
        <strain>PCC 7425 / ATCC 29141</strain>
    </source>
</reference>
<protein>
    <recommendedName>
        <fullName evidence="1">Ribosome-binding factor A</fullName>
    </recommendedName>
</protein>
<dbReference type="EMBL" id="CP001344">
    <property type="protein sequence ID" value="ACL43224.1"/>
    <property type="molecule type" value="Genomic_DNA"/>
</dbReference>
<dbReference type="SMR" id="B8HWS1"/>
<dbReference type="STRING" id="395961.Cyan7425_0838"/>
<dbReference type="KEGG" id="cyn:Cyan7425_0838"/>
<dbReference type="eggNOG" id="COG0858">
    <property type="taxonomic scope" value="Bacteria"/>
</dbReference>
<dbReference type="HOGENOM" id="CLU_089475_2_1_3"/>
<dbReference type="OrthoDB" id="307788at2"/>
<dbReference type="GO" id="GO:0005829">
    <property type="term" value="C:cytosol"/>
    <property type="evidence" value="ECO:0007669"/>
    <property type="project" value="TreeGrafter"/>
</dbReference>
<dbReference type="GO" id="GO:0043024">
    <property type="term" value="F:ribosomal small subunit binding"/>
    <property type="evidence" value="ECO:0007669"/>
    <property type="project" value="TreeGrafter"/>
</dbReference>
<dbReference type="GO" id="GO:0030490">
    <property type="term" value="P:maturation of SSU-rRNA"/>
    <property type="evidence" value="ECO:0007669"/>
    <property type="project" value="UniProtKB-UniRule"/>
</dbReference>
<dbReference type="Gene3D" id="3.30.300.20">
    <property type="match status" value="1"/>
</dbReference>
<dbReference type="HAMAP" id="MF_00003">
    <property type="entry name" value="RbfA"/>
    <property type="match status" value="1"/>
</dbReference>
<dbReference type="InterPro" id="IPR015946">
    <property type="entry name" value="KH_dom-like_a/b"/>
</dbReference>
<dbReference type="InterPro" id="IPR000238">
    <property type="entry name" value="RbfA"/>
</dbReference>
<dbReference type="InterPro" id="IPR023799">
    <property type="entry name" value="RbfA_dom_sf"/>
</dbReference>
<dbReference type="InterPro" id="IPR020053">
    <property type="entry name" value="Ribosome-bd_factorA_CS"/>
</dbReference>
<dbReference type="NCBIfam" id="TIGR00082">
    <property type="entry name" value="rbfA"/>
    <property type="match status" value="1"/>
</dbReference>
<dbReference type="PANTHER" id="PTHR33515">
    <property type="entry name" value="RIBOSOME-BINDING FACTOR A, CHLOROPLASTIC-RELATED"/>
    <property type="match status" value="1"/>
</dbReference>
<dbReference type="PANTHER" id="PTHR33515:SF1">
    <property type="entry name" value="RIBOSOME-BINDING FACTOR A, CHLOROPLASTIC-RELATED"/>
    <property type="match status" value="1"/>
</dbReference>
<dbReference type="Pfam" id="PF02033">
    <property type="entry name" value="RBFA"/>
    <property type="match status" value="1"/>
</dbReference>
<dbReference type="SUPFAM" id="SSF89919">
    <property type="entry name" value="Ribosome-binding factor A, RbfA"/>
    <property type="match status" value="1"/>
</dbReference>
<dbReference type="PROSITE" id="PS01319">
    <property type="entry name" value="RBFA"/>
    <property type="match status" value="1"/>
</dbReference>
<sequence length="134" mass="14905">MATDRRVARVAELIKREISQMLMSGIKDDRVGSGMVSVTDVDLSGDLQHAKIFVSIYGTEAARAETMAGLKAATGYVRSELGHRVRLRRTPEVVFLEDRSLERGTQVLSLLNRLSEERQKNADLDEMAAEEPES</sequence>
<comment type="function">
    <text evidence="1">One of several proteins that assist in the late maturation steps of the functional core of the 30S ribosomal subunit. Associates with free 30S ribosomal subunits (but not with 30S subunits that are part of 70S ribosomes or polysomes). Required for efficient processing of 16S rRNA. May interact with the 5'-terminal helix region of 16S rRNA.</text>
</comment>
<comment type="subunit">
    <text evidence="1">Monomer. Binds 30S ribosomal subunits, but not 50S ribosomal subunits or 70S ribosomes.</text>
</comment>
<comment type="subcellular location">
    <subcellularLocation>
        <location evidence="1">Cytoplasm</location>
    </subcellularLocation>
</comment>
<comment type="similarity">
    <text evidence="1">Belongs to the RbfA family.</text>
</comment>
<keyword id="KW-0963">Cytoplasm</keyword>
<keyword id="KW-0690">Ribosome biogenesis</keyword>
<name>RBFA_CYAP4</name>
<feature type="chain" id="PRO_1000193247" description="Ribosome-binding factor A">
    <location>
        <begin position="1"/>
        <end position="134"/>
    </location>
</feature>
<organism>
    <name type="scientific">Cyanothece sp. (strain PCC 7425 / ATCC 29141)</name>
    <dbReference type="NCBI Taxonomy" id="395961"/>
    <lineage>
        <taxon>Bacteria</taxon>
        <taxon>Bacillati</taxon>
        <taxon>Cyanobacteriota</taxon>
        <taxon>Cyanophyceae</taxon>
        <taxon>Gomontiellales</taxon>
        <taxon>Cyanothecaceae</taxon>
        <taxon>Cyanothece</taxon>
    </lineage>
</organism>
<accession>B8HWS1</accession>